<evidence type="ECO:0000255" key="1">
    <source>
        <dbReference type="HAMAP-Rule" id="MF_01085"/>
    </source>
</evidence>
<sequence length="354" mass="39655">MTEPLKPRIDFAESLSGPQEPVLKPAQIFNEKETANFCPASPELEAEEREGQVEGIVNAALKPKRSGWRKMVYGSLMLLGLSAVAQFVQWIYQSWQQQDWSALGVAAAGSMIVFAGIGSLVSEWHRLYRLRVRSEERDTARALLQHHGVGKGREFCEKLASQAGIEQHNPALQRWRAALHDTHNDREVVVLYSKWVQPVLDSQVRAEISRCAAESALMIAVSPLAIVDMAFIAWRNIRLINRIAALYGIELGYFSRIRLFRLVLLNIVFSGASEVVREVGMDWLSQDIAARLSVRAAQGIGVGLLTARLGIKAMELCRPLPWIEGDKPKLGDFRRQLITQLKNILPNKSKNIVN</sequence>
<reference key="1">
    <citation type="journal article" date="2003" name="Nat. Biotechnol.">
        <title>The genome sequence of the entomopathogenic bacterium Photorhabdus luminescens.</title>
        <authorList>
            <person name="Duchaud E."/>
            <person name="Rusniok C."/>
            <person name="Frangeul L."/>
            <person name="Buchrieser C."/>
            <person name="Givaudan A."/>
            <person name="Taourit S."/>
            <person name="Bocs S."/>
            <person name="Boursaux-Eude C."/>
            <person name="Chandler M."/>
            <person name="Charles J.-F."/>
            <person name="Dassa E."/>
            <person name="Derose R."/>
            <person name="Derzelle S."/>
            <person name="Freyssinet G."/>
            <person name="Gaudriault S."/>
            <person name="Medigue C."/>
            <person name="Lanois A."/>
            <person name="Powell K."/>
            <person name="Siguier P."/>
            <person name="Vincent R."/>
            <person name="Wingate V."/>
            <person name="Zouine M."/>
            <person name="Glaser P."/>
            <person name="Boemare N."/>
            <person name="Danchin A."/>
            <person name="Kunst F."/>
        </authorList>
    </citation>
    <scope>NUCLEOTIDE SEQUENCE [LARGE SCALE GENOMIC DNA]</scope>
    <source>
        <strain>DSM 15139 / CIP 105565 / TT01</strain>
    </source>
</reference>
<dbReference type="EMBL" id="BX571867">
    <property type="protein sequence ID" value="CAE14955.1"/>
    <property type="molecule type" value="Genomic_DNA"/>
</dbReference>
<dbReference type="RefSeq" id="WP_011146803.1">
    <property type="nucleotide sequence ID" value="NC_005126.1"/>
</dbReference>
<dbReference type="STRING" id="243265.plu2581"/>
<dbReference type="GeneID" id="48848840"/>
<dbReference type="KEGG" id="plu:plu2581"/>
<dbReference type="eggNOG" id="COG3768">
    <property type="taxonomic scope" value="Bacteria"/>
</dbReference>
<dbReference type="HOGENOM" id="CLU_057693_2_0_6"/>
<dbReference type="OrthoDB" id="958025at2"/>
<dbReference type="Proteomes" id="UP000002514">
    <property type="component" value="Chromosome"/>
</dbReference>
<dbReference type="GO" id="GO:0005886">
    <property type="term" value="C:plasma membrane"/>
    <property type="evidence" value="ECO:0007669"/>
    <property type="project" value="UniProtKB-SubCell"/>
</dbReference>
<dbReference type="HAMAP" id="MF_01085">
    <property type="entry name" value="UPF0283"/>
    <property type="match status" value="1"/>
</dbReference>
<dbReference type="InterPro" id="IPR021147">
    <property type="entry name" value="DUF697"/>
</dbReference>
<dbReference type="InterPro" id="IPR006507">
    <property type="entry name" value="UPF0283"/>
</dbReference>
<dbReference type="NCBIfam" id="TIGR01620">
    <property type="entry name" value="hyp_HI0043"/>
    <property type="match status" value="1"/>
</dbReference>
<dbReference type="PANTHER" id="PTHR39342">
    <property type="entry name" value="UPF0283 MEMBRANE PROTEIN YCJF"/>
    <property type="match status" value="1"/>
</dbReference>
<dbReference type="PANTHER" id="PTHR39342:SF1">
    <property type="entry name" value="UPF0283 MEMBRANE PROTEIN YCJF"/>
    <property type="match status" value="1"/>
</dbReference>
<dbReference type="Pfam" id="PF05128">
    <property type="entry name" value="DUF697"/>
    <property type="match status" value="1"/>
</dbReference>
<feature type="chain" id="PRO_0000214178" description="UPF0283 membrane protein plu2581">
    <location>
        <begin position="1"/>
        <end position="354"/>
    </location>
</feature>
<feature type="transmembrane region" description="Helical" evidence="1">
    <location>
        <begin position="71"/>
        <end position="91"/>
    </location>
</feature>
<feature type="transmembrane region" description="Helical" evidence="1">
    <location>
        <begin position="101"/>
        <end position="121"/>
    </location>
</feature>
<feature type="transmembrane region" description="Helical" evidence="1">
    <location>
        <begin position="214"/>
        <end position="234"/>
    </location>
</feature>
<gene>
    <name type="ordered locus">plu2581</name>
</gene>
<name>Y2581_PHOLL</name>
<protein>
    <recommendedName>
        <fullName evidence="1">UPF0283 membrane protein plu2581</fullName>
    </recommendedName>
</protein>
<proteinExistence type="inferred from homology"/>
<comment type="subcellular location">
    <subcellularLocation>
        <location evidence="1">Cell inner membrane</location>
        <topology evidence="1">Multi-pass membrane protein</topology>
    </subcellularLocation>
</comment>
<comment type="similarity">
    <text evidence="1">Belongs to the UPF0283 family.</text>
</comment>
<accession>Q7N3Y1</accession>
<organism>
    <name type="scientific">Photorhabdus laumondii subsp. laumondii (strain DSM 15139 / CIP 105565 / TT01)</name>
    <name type="common">Photorhabdus luminescens subsp. laumondii</name>
    <dbReference type="NCBI Taxonomy" id="243265"/>
    <lineage>
        <taxon>Bacteria</taxon>
        <taxon>Pseudomonadati</taxon>
        <taxon>Pseudomonadota</taxon>
        <taxon>Gammaproteobacteria</taxon>
        <taxon>Enterobacterales</taxon>
        <taxon>Morganellaceae</taxon>
        <taxon>Photorhabdus</taxon>
    </lineage>
</organism>
<keyword id="KW-0997">Cell inner membrane</keyword>
<keyword id="KW-1003">Cell membrane</keyword>
<keyword id="KW-0472">Membrane</keyword>
<keyword id="KW-1185">Reference proteome</keyword>
<keyword id="KW-0812">Transmembrane</keyword>
<keyword id="KW-1133">Transmembrane helix</keyword>